<organism>
    <name type="scientific">Escherichia coli O7:K1 (strain IAI39 / ExPEC)</name>
    <dbReference type="NCBI Taxonomy" id="585057"/>
    <lineage>
        <taxon>Bacteria</taxon>
        <taxon>Pseudomonadati</taxon>
        <taxon>Pseudomonadota</taxon>
        <taxon>Gammaproteobacteria</taxon>
        <taxon>Enterobacterales</taxon>
        <taxon>Enterobacteriaceae</taxon>
        <taxon>Escherichia</taxon>
    </lineage>
</organism>
<gene>
    <name evidence="1" type="primary">mdh</name>
    <name type="ordered locus">ECIAI39_3727</name>
</gene>
<sequence length="312" mass="32337">MKVAVLGAAGGIGQALALLLKTQLPSGSELSLYDIAPVTPGVAVDLSHIPTAVKIKGFSGEDATPALEGADVVLISAGVARKPGMDRSDLFNVNAGIVKNLVQQVAKTCPKACIGIITNPVNTTVAIAAEVLKKAGVYDKNKLFGVTTLDIIRSNTFVAELKGKQPGEVEVPVIGGHSGVTILPLLSQVPGVSFTEQEVADLTKRIQNAGTEVVEAKAGGGSATLSMGQAAARFGLSLVRALQGEQGVVECAYVEGDGQYARFFSQPLLLGKNGVEERKSIGTLSAFEKNALEGMLDTLKKDIALGEEFVNK</sequence>
<evidence type="ECO:0000255" key="1">
    <source>
        <dbReference type="HAMAP-Rule" id="MF_01516"/>
    </source>
</evidence>
<name>MDH_ECO7I</name>
<reference key="1">
    <citation type="journal article" date="2009" name="PLoS Genet.">
        <title>Organised genome dynamics in the Escherichia coli species results in highly diverse adaptive paths.</title>
        <authorList>
            <person name="Touchon M."/>
            <person name="Hoede C."/>
            <person name="Tenaillon O."/>
            <person name="Barbe V."/>
            <person name="Baeriswyl S."/>
            <person name="Bidet P."/>
            <person name="Bingen E."/>
            <person name="Bonacorsi S."/>
            <person name="Bouchier C."/>
            <person name="Bouvet O."/>
            <person name="Calteau A."/>
            <person name="Chiapello H."/>
            <person name="Clermont O."/>
            <person name="Cruveiller S."/>
            <person name="Danchin A."/>
            <person name="Diard M."/>
            <person name="Dossat C."/>
            <person name="Karoui M.E."/>
            <person name="Frapy E."/>
            <person name="Garry L."/>
            <person name="Ghigo J.M."/>
            <person name="Gilles A.M."/>
            <person name="Johnson J."/>
            <person name="Le Bouguenec C."/>
            <person name="Lescat M."/>
            <person name="Mangenot S."/>
            <person name="Martinez-Jehanne V."/>
            <person name="Matic I."/>
            <person name="Nassif X."/>
            <person name="Oztas S."/>
            <person name="Petit M.A."/>
            <person name="Pichon C."/>
            <person name="Rouy Z."/>
            <person name="Ruf C.S."/>
            <person name="Schneider D."/>
            <person name="Tourret J."/>
            <person name="Vacherie B."/>
            <person name="Vallenet D."/>
            <person name="Medigue C."/>
            <person name="Rocha E.P.C."/>
            <person name="Denamur E."/>
        </authorList>
    </citation>
    <scope>NUCLEOTIDE SEQUENCE [LARGE SCALE GENOMIC DNA]</scope>
    <source>
        <strain>IAI39 / ExPEC</strain>
    </source>
</reference>
<dbReference type="EC" id="1.1.1.37" evidence="1"/>
<dbReference type="EMBL" id="CU928164">
    <property type="protein sequence ID" value="CAR19843.1"/>
    <property type="molecule type" value="Genomic_DNA"/>
</dbReference>
<dbReference type="RefSeq" id="WP_001315036.1">
    <property type="nucleotide sequence ID" value="NC_011750.1"/>
</dbReference>
<dbReference type="RefSeq" id="YP_002409630.1">
    <property type="nucleotide sequence ID" value="NC_011750.1"/>
</dbReference>
<dbReference type="SMR" id="B7NKU9"/>
<dbReference type="STRING" id="585057.ECIAI39_3727"/>
<dbReference type="KEGG" id="ect:ECIAI39_3727"/>
<dbReference type="PATRIC" id="fig|585057.6.peg.3863"/>
<dbReference type="HOGENOM" id="CLU_047181_0_1_6"/>
<dbReference type="Proteomes" id="UP000000749">
    <property type="component" value="Chromosome"/>
</dbReference>
<dbReference type="GO" id="GO:0005737">
    <property type="term" value="C:cytoplasm"/>
    <property type="evidence" value="ECO:0007669"/>
    <property type="project" value="TreeGrafter"/>
</dbReference>
<dbReference type="GO" id="GO:0030060">
    <property type="term" value="F:L-malate dehydrogenase (NAD+) activity"/>
    <property type="evidence" value="ECO:0007669"/>
    <property type="project" value="UniProtKB-UniRule"/>
</dbReference>
<dbReference type="GO" id="GO:0006108">
    <property type="term" value="P:malate metabolic process"/>
    <property type="evidence" value="ECO:0007669"/>
    <property type="project" value="InterPro"/>
</dbReference>
<dbReference type="GO" id="GO:0006099">
    <property type="term" value="P:tricarboxylic acid cycle"/>
    <property type="evidence" value="ECO:0007669"/>
    <property type="project" value="UniProtKB-UniRule"/>
</dbReference>
<dbReference type="CDD" id="cd01337">
    <property type="entry name" value="MDH_glyoxysomal_mitochondrial"/>
    <property type="match status" value="1"/>
</dbReference>
<dbReference type="FunFam" id="3.40.50.720:FF:000017">
    <property type="entry name" value="Malate dehydrogenase"/>
    <property type="match status" value="1"/>
</dbReference>
<dbReference type="FunFam" id="3.90.110.10:FF:000001">
    <property type="entry name" value="Malate dehydrogenase"/>
    <property type="match status" value="1"/>
</dbReference>
<dbReference type="Gene3D" id="3.90.110.10">
    <property type="entry name" value="Lactate dehydrogenase/glycoside hydrolase, family 4, C-terminal"/>
    <property type="match status" value="1"/>
</dbReference>
<dbReference type="Gene3D" id="3.40.50.720">
    <property type="entry name" value="NAD(P)-binding Rossmann-like Domain"/>
    <property type="match status" value="1"/>
</dbReference>
<dbReference type="HAMAP" id="MF_01516">
    <property type="entry name" value="Malate_dehydrog_1"/>
    <property type="match status" value="1"/>
</dbReference>
<dbReference type="InterPro" id="IPR001557">
    <property type="entry name" value="L-lactate/malate_DH"/>
</dbReference>
<dbReference type="InterPro" id="IPR022383">
    <property type="entry name" value="Lactate/malate_DH_C"/>
</dbReference>
<dbReference type="InterPro" id="IPR001236">
    <property type="entry name" value="Lactate/malate_DH_N"/>
</dbReference>
<dbReference type="InterPro" id="IPR015955">
    <property type="entry name" value="Lactate_DH/Glyco_Ohase_4_C"/>
</dbReference>
<dbReference type="InterPro" id="IPR001252">
    <property type="entry name" value="Malate_DH_AS"/>
</dbReference>
<dbReference type="InterPro" id="IPR010097">
    <property type="entry name" value="Malate_DH_type1"/>
</dbReference>
<dbReference type="InterPro" id="IPR023958">
    <property type="entry name" value="Malate_DH_type1_bac"/>
</dbReference>
<dbReference type="InterPro" id="IPR036291">
    <property type="entry name" value="NAD(P)-bd_dom_sf"/>
</dbReference>
<dbReference type="NCBIfam" id="TIGR01772">
    <property type="entry name" value="MDH_euk_gproteo"/>
    <property type="match status" value="1"/>
</dbReference>
<dbReference type="PANTHER" id="PTHR11540">
    <property type="entry name" value="MALATE AND LACTATE DEHYDROGENASE"/>
    <property type="match status" value="1"/>
</dbReference>
<dbReference type="PANTHER" id="PTHR11540:SF16">
    <property type="entry name" value="MALATE DEHYDROGENASE, MITOCHONDRIAL"/>
    <property type="match status" value="1"/>
</dbReference>
<dbReference type="Pfam" id="PF02866">
    <property type="entry name" value="Ldh_1_C"/>
    <property type="match status" value="1"/>
</dbReference>
<dbReference type="Pfam" id="PF00056">
    <property type="entry name" value="Ldh_1_N"/>
    <property type="match status" value="1"/>
</dbReference>
<dbReference type="PIRSF" id="PIRSF000102">
    <property type="entry name" value="Lac_mal_DH"/>
    <property type="match status" value="1"/>
</dbReference>
<dbReference type="SUPFAM" id="SSF56327">
    <property type="entry name" value="LDH C-terminal domain-like"/>
    <property type="match status" value="1"/>
</dbReference>
<dbReference type="SUPFAM" id="SSF51735">
    <property type="entry name" value="NAD(P)-binding Rossmann-fold domains"/>
    <property type="match status" value="1"/>
</dbReference>
<dbReference type="PROSITE" id="PS00068">
    <property type="entry name" value="MDH"/>
    <property type="match status" value="1"/>
</dbReference>
<accession>B7NKU9</accession>
<proteinExistence type="inferred from homology"/>
<feature type="chain" id="PRO_1000146171" description="Malate dehydrogenase">
    <location>
        <begin position="1"/>
        <end position="312"/>
    </location>
</feature>
<feature type="active site" description="Proton acceptor" evidence="1">
    <location>
        <position position="177"/>
    </location>
</feature>
<feature type="binding site" evidence="1">
    <location>
        <begin position="7"/>
        <end position="13"/>
    </location>
    <ligand>
        <name>NAD(+)</name>
        <dbReference type="ChEBI" id="CHEBI:57540"/>
    </ligand>
</feature>
<feature type="binding site" evidence="1">
    <location>
        <position position="34"/>
    </location>
    <ligand>
        <name>NAD(+)</name>
        <dbReference type="ChEBI" id="CHEBI:57540"/>
    </ligand>
</feature>
<feature type="binding site" evidence="1">
    <location>
        <position position="81"/>
    </location>
    <ligand>
        <name>substrate</name>
    </ligand>
</feature>
<feature type="binding site" evidence="1">
    <location>
        <position position="87"/>
    </location>
    <ligand>
        <name>substrate</name>
    </ligand>
</feature>
<feature type="binding site" evidence="1">
    <location>
        <position position="94"/>
    </location>
    <ligand>
        <name>NAD(+)</name>
        <dbReference type="ChEBI" id="CHEBI:57540"/>
    </ligand>
</feature>
<feature type="binding site" evidence="1">
    <location>
        <begin position="117"/>
        <end position="119"/>
    </location>
    <ligand>
        <name>NAD(+)</name>
        <dbReference type="ChEBI" id="CHEBI:57540"/>
    </ligand>
</feature>
<feature type="binding site" evidence="1">
    <location>
        <position position="119"/>
    </location>
    <ligand>
        <name>substrate</name>
    </ligand>
</feature>
<feature type="binding site" evidence="1">
    <location>
        <position position="153"/>
    </location>
    <ligand>
        <name>substrate</name>
    </ligand>
</feature>
<feature type="binding site" evidence="1">
    <location>
        <position position="227"/>
    </location>
    <ligand>
        <name>NAD(+)</name>
        <dbReference type="ChEBI" id="CHEBI:57540"/>
    </ligand>
</feature>
<protein>
    <recommendedName>
        <fullName evidence="1">Malate dehydrogenase</fullName>
        <ecNumber evidence="1">1.1.1.37</ecNumber>
    </recommendedName>
</protein>
<keyword id="KW-0520">NAD</keyword>
<keyword id="KW-0560">Oxidoreductase</keyword>
<keyword id="KW-0816">Tricarboxylic acid cycle</keyword>
<comment type="function">
    <text evidence="1">Catalyzes the reversible oxidation of malate to oxaloacetate.</text>
</comment>
<comment type="catalytic activity">
    <reaction evidence="1">
        <text>(S)-malate + NAD(+) = oxaloacetate + NADH + H(+)</text>
        <dbReference type="Rhea" id="RHEA:21432"/>
        <dbReference type="ChEBI" id="CHEBI:15378"/>
        <dbReference type="ChEBI" id="CHEBI:15589"/>
        <dbReference type="ChEBI" id="CHEBI:16452"/>
        <dbReference type="ChEBI" id="CHEBI:57540"/>
        <dbReference type="ChEBI" id="CHEBI:57945"/>
        <dbReference type="EC" id="1.1.1.37"/>
    </reaction>
</comment>
<comment type="subunit">
    <text evidence="1">Homodimer.</text>
</comment>
<comment type="similarity">
    <text evidence="1">Belongs to the LDH/MDH superfamily. MDH type 1 family.</text>
</comment>